<gene>
    <name type="primary">PbP450-1</name>
</gene>
<proteinExistence type="evidence at protein level"/>
<accession>Q6F5E4</accession>
<evidence type="ECO:0000250" key="1">
    <source>
        <dbReference type="UniProtKB" id="P04798"/>
    </source>
</evidence>
<evidence type="ECO:0000255" key="2"/>
<evidence type="ECO:0000255" key="3">
    <source>
        <dbReference type="PROSITE-ProRule" id="PRU00498"/>
    </source>
</evidence>
<evidence type="ECO:0000269" key="4">
    <source>
    </source>
</evidence>
<evidence type="ECO:0000269" key="5">
    <source>
    </source>
</evidence>
<evidence type="ECO:0000269" key="6">
    <source>
    </source>
</evidence>
<evidence type="ECO:0000303" key="7">
    <source>
    </source>
</evidence>
<evidence type="ECO:0000305" key="8"/>
<protein>
    <recommendedName>
        <fullName evidence="7">Cytochrome P450 monooxygenase 1</fullName>
        <ecNumber evidence="6">1.-.-.-</ecNumber>
    </recommendedName>
    <alternativeName>
        <fullName evidence="8">Aphidicolin biosynthesis protein PbP450-1</fullName>
    </alternativeName>
</protein>
<feature type="signal peptide" evidence="2">
    <location>
        <begin position="1"/>
        <end position="21"/>
    </location>
</feature>
<feature type="chain" id="PRO_0000438555" description="Cytochrome P450 monooxygenase 1">
    <location>
        <begin position="22"/>
        <end position="486"/>
    </location>
</feature>
<feature type="binding site" description="axial binding residue" evidence="1">
    <location>
        <position position="430"/>
    </location>
    <ligand>
        <name>heme</name>
        <dbReference type="ChEBI" id="CHEBI:30413"/>
    </ligand>
    <ligandPart>
        <name>Fe</name>
        <dbReference type="ChEBI" id="CHEBI:18248"/>
    </ligandPart>
</feature>
<feature type="glycosylation site" description="N-linked (GlcNAc...) asparagine" evidence="3">
    <location>
        <position position="346"/>
    </location>
</feature>
<feature type="glycosylation site" description="N-linked (GlcNAc...) asparagine" evidence="3">
    <location>
        <position position="434"/>
    </location>
</feature>
<keyword id="KW-0325">Glycoprotein</keyword>
<keyword id="KW-0349">Heme</keyword>
<keyword id="KW-0408">Iron</keyword>
<keyword id="KW-0479">Metal-binding</keyword>
<keyword id="KW-0503">Monooxygenase</keyword>
<keyword id="KW-0560">Oxidoreductase</keyword>
<keyword id="KW-0732">Signal</keyword>
<name>P4501_NEOBT</name>
<sequence>MSHFLPTLILTSLTLVAYVLARMIYNVFYHPLSAFPGDAFFCATGLTKAYHMIAGDLQLKVKDMHDKYGSVVRIAPTELSFSYCSAWKDIYGSRGGRELSKFYDFYRVDEAMPQHIISAGKAKHSILRRYLAHGFSENAMKAQEPVILDLVNLLMQRLREHAEEGARVVDVNKWFNFATFEIIGKLTFGADLGNLRNRDWHPWVKGSANNNMVVGFMAAANSVGLGPIIKWCISNEILPRQKYLDELAEMVQKRTGVTVERPDFIQGLLRDDVQLSNGEIVANVEALIGAGSESTATLLTGTVCALLQNPDQLAKVIDEVRSTFRTEDEITLHSVQRLDYMLACLNETFRYYPPVTNGMPRVTPKEGAIIGGRLVPGNTVVAIWQWAICHDPALWKDPYTFRPERFLEAPEFSTDVREALNPFSVGTRNCIGRNLSYAETRLILARLFYYFDLELADPDQDWFGAQKAYLVWDAPALNMYLKPVVR</sequence>
<reference key="1">
    <citation type="journal article" date="2004" name="Biosci. Biotechnol. Biochem.">
        <title>Cloning of a gene cluster responsible for the biosynthesis of diterpene aphidicolin, a specific inhibitor of DNA polymerase alpha.</title>
        <authorList>
            <person name="Toyomasu T."/>
            <person name="Nakaminami K."/>
            <person name="Toshima H."/>
            <person name="Mie T."/>
            <person name="Watanabe K."/>
            <person name="Ito H."/>
            <person name="Matsui H."/>
            <person name="Mitsuhashi W."/>
            <person name="Sassa T."/>
            <person name="Oikawa H."/>
        </authorList>
    </citation>
    <scope>NUCLEOTIDE SEQUENCE [GENOMIC DNA]</scope>
    <scope>IDENTIFICATION OF GENE CLUSTER</scope>
    <source>
        <strain>PS-16</strain>
    </source>
</reference>
<reference key="2">
    <citation type="journal article" date="2001" name="J. Am. Chem. Soc.">
        <title>Cloning and functional expression of cDNA encoding aphidicolan-16 beta-ol synthase: a key enzyme responsible for formation of an unusual diterpene skeleton in biosynthesis of aphidicolin.</title>
        <authorList>
            <person name="Oikawa H."/>
            <person name="Toyomasu T."/>
            <person name="Toshima H."/>
            <person name="Ohashi S."/>
            <person name="Kawaide H."/>
            <person name="Kamiya Y."/>
            <person name="Ohtsuka M."/>
            <person name="Shinoda S."/>
            <person name="Mitsuhashi W."/>
            <person name="Sassa T."/>
        </authorList>
    </citation>
    <scope>FUNCTION</scope>
</reference>
<reference key="3">
    <citation type="journal article" date="2011" name="Biosci. Biotechnol. Biochem.">
        <title>Total biosynthesis of diterpene aphidicolin, a specific inhibitor of DNA polymerase alpha: heterologous expression of four biosynthetic genes in Aspergillus oryzae.</title>
        <authorList>
            <person name="Fujii R."/>
            <person name="Minami A."/>
            <person name="Tsukagoshi T."/>
            <person name="Sato N."/>
            <person name="Sahara T."/>
            <person name="Ohgiya S."/>
            <person name="Gomi K."/>
            <person name="Oikawa H."/>
        </authorList>
    </citation>
    <scope>FUNCTION</scope>
    <scope>CATALYTIC ACTIVITY</scope>
    <scope>PATHWAY</scope>
</reference>
<dbReference type="EC" id="1.-.-.-" evidence="6"/>
<dbReference type="EMBL" id="AB079898">
    <property type="protein sequence ID" value="BAD29966.1"/>
    <property type="molecule type" value="mRNA"/>
</dbReference>
<dbReference type="EMBL" id="AB114137">
    <property type="protein sequence ID" value="BAD29972.1"/>
    <property type="molecule type" value="Genomic_DNA"/>
</dbReference>
<dbReference type="SMR" id="Q6F5E4"/>
<dbReference type="GlyCosmos" id="Q6F5E4">
    <property type="glycosylation" value="2 sites, No reported glycans"/>
</dbReference>
<dbReference type="GO" id="GO:0020037">
    <property type="term" value="F:heme binding"/>
    <property type="evidence" value="ECO:0007669"/>
    <property type="project" value="InterPro"/>
</dbReference>
<dbReference type="GO" id="GO:0005506">
    <property type="term" value="F:iron ion binding"/>
    <property type="evidence" value="ECO:0007669"/>
    <property type="project" value="InterPro"/>
</dbReference>
<dbReference type="GO" id="GO:0004497">
    <property type="term" value="F:monooxygenase activity"/>
    <property type="evidence" value="ECO:0007669"/>
    <property type="project" value="UniProtKB-KW"/>
</dbReference>
<dbReference type="GO" id="GO:0016705">
    <property type="term" value="F:oxidoreductase activity, acting on paired donors, with incorporation or reduction of molecular oxygen"/>
    <property type="evidence" value="ECO:0007669"/>
    <property type="project" value="InterPro"/>
</dbReference>
<dbReference type="CDD" id="cd11058">
    <property type="entry name" value="CYP60B-like"/>
    <property type="match status" value="1"/>
</dbReference>
<dbReference type="Gene3D" id="1.10.630.10">
    <property type="entry name" value="Cytochrome P450"/>
    <property type="match status" value="1"/>
</dbReference>
<dbReference type="InterPro" id="IPR001128">
    <property type="entry name" value="Cyt_P450"/>
</dbReference>
<dbReference type="InterPro" id="IPR017972">
    <property type="entry name" value="Cyt_P450_CS"/>
</dbReference>
<dbReference type="InterPro" id="IPR002401">
    <property type="entry name" value="Cyt_P450_E_grp-I"/>
</dbReference>
<dbReference type="InterPro" id="IPR036396">
    <property type="entry name" value="Cyt_P450_sf"/>
</dbReference>
<dbReference type="InterPro" id="IPR050121">
    <property type="entry name" value="Cytochrome_P450_monoxygenase"/>
</dbReference>
<dbReference type="PANTHER" id="PTHR24305">
    <property type="entry name" value="CYTOCHROME P450"/>
    <property type="match status" value="1"/>
</dbReference>
<dbReference type="PANTHER" id="PTHR24305:SF230">
    <property type="entry name" value="P450, PUTATIVE (EUROFUNG)-RELATED"/>
    <property type="match status" value="1"/>
</dbReference>
<dbReference type="Pfam" id="PF00067">
    <property type="entry name" value="p450"/>
    <property type="match status" value="1"/>
</dbReference>
<dbReference type="PRINTS" id="PR00463">
    <property type="entry name" value="EP450I"/>
</dbReference>
<dbReference type="PRINTS" id="PR00385">
    <property type="entry name" value="P450"/>
</dbReference>
<dbReference type="SUPFAM" id="SSF48264">
    <property type="entry name" value="Cytochrome P450"/>
    <property type="match status" value="1"/>
</dbReference>
<dbReference type="PROSITE" id="PS00086">
    <property type="entry name" value="CYTOCHROME_P450"/>
    <property type="match status" value="1"/>
</dbReference>
<comment type="function">
    <text evidence="4 5 6">Cytochrome P450 monooxygenase; part of the gene cluster that mediates the biosynthesis of aphidicolin, a specific inhibitor of eukaryotic DNA synthesis and DNA polymerase alpha (PubMed:14745177, PubMed:21897020). The geranylgeranyl pyrophosphate synthase GGS is required for supplying a sufficient amount of geranylgeranyl diphosphate (GGDP), the general precursor of diterpenes (PubMed:21897020). The diterpene synthase ACS then catalyzes the conversion of geranylgeranyl diphosphate to aphidicolan-16-beta-ol via the intermediate syn-copalyldiphosphate (syn-CDP) (PubMed:11457369, PubMed:21897020). In addition to aphidicolan-16-beta-ol, the enzyme also produces low levels of amphidicol-15-ene and amphidicol-16-ene (PubMed:11457369). The cytochrome P450 monooxygenase P450-2 then catalyzes the two-step hydroxylation from aphidicolan-16-beta-ol to 3-deoxyaphidicolin via a 17,3-deoxyaphidicolin intermediate (PubMed:21897020). Finally, the cytochrome P450 monooxygenase P450-1 converts 3-deoxyaphidicolin to aphidicolin (PubMed:21897020).</text>
</comment>
<comment type="cofactor">
    <cofactor evidence="1">
        <name>heme</name>
        <dbReference type="ChEBI" id="CHEBI:30413"/>
    </cofactor>
</comment>
<comment type="pathway">
    <text evidence="6">Mycotoxin biosynthesis.</text>
</comment>
<comment type="similarity">
    <text evidence="8">Belongs to the cytochrome P450 family.</text>
</comment>
<organism>
    <name type="scientific">Neocamarosporium betae</name>
    <name type="common">Beet black rot fungus</name>
    <name type="synonym">Pleospora betae</name>
    <dbReference type="NCBI Taxonomy" id="1979465"/>
    <lineage>
        <taxon>Eukaryota</taxon>
        <taxon>Fungi</taxon>
        <taxon>Dikarya</taxon>
        <taxon>Ascomycota</taxon>
        <taxon>Pezizomycotina</taxon>
        <taxon>Dothideomycetes</taxon>
        <taxon>Pleosporomycetidae</taxon>
        <taxon>Pleosporales</taxon>
        <taxon>Pleosporineae</taxon>
        <taxon>Pleosporaceae</taxon>
        <taxon>Neocamarosporium</taxon>
    </lineage>
</organism>